<reference key="1">
    <citation type="journal article" date="2004" name="Nature">
        <title>Genome evolution in yeasts.</title>
        <authorList>
            <person name="Dujon B."/>
            <person name="Sherman D."/>
            <person name="Fischer G."/>
            <person name="Durrens P."/>
            <person name="Casaregola S."/>
            <person name="Lafontaine I."/>
            <person name="de Montigny J."/>
            <person name="Marck C."/>
            <person name="Neuveglise C."/>
            <person name="Talla E."/>
            <person name="Goffard N."/>
            <person name="Frangeul L."/>
            <person name="Aigle M."/>
            <person name="Anthouard V."/>
            <person name="Babour A."/>
            <person name="Barbe V."/>
            <person name="Barnay S."/>
            <person name="Blanchin S."/>
            <person name="Beckerich J.-M."/>
            <person name="Beyne E."/>
            <person name="Bleykasten C."/>
            <person name="Boisrame A."/>
            <person name="Boyer J."/>
            <person name="Cattolico L."/>
            <person name="Confanioleri F."/>
            <person name="de Daruvar A."/>
            <person name="Despons L."/>
            <person name="Fabre E."/>
            <person name="Fairhead C."/>
            <person name="Ferry-Dumazet H."/>
            <person name="Groppi A."/>
            <person name="Hantraye F."/>
            <person name="Hennequin C."/>
            <person name="Jauniaux N."/>
            <person name="Joyet P."/>
            <person name="Kachouri R."/>
            <person name="Kerrest A."/>
            <person name="Koszul R."/>
            <person name="Lemaire M."/>
            <person name="Lesur I."/>
            <person name="Ma L."/>
            <person name="Muller H."/>
            <person name="Nicaud J.-M."/>
            <person name="Nikolski M."/>
            <person name="Oztas S."/>
            <person name="Ozier-Kalogeropoulos O."/>
            <person name="Pellenz S."/>
            <person name="Potier S."/>
            <person name="Richard G.-F."/>
            <person name="Straub M.-L."/>
            <person name="Suleau A."/>
            <person name="Swennen D."/>
            <person name="Tekaia F."/>
            <person name="Wesolowski-Louvel M."/>
            <person name="Westhof E."/>
            <person name="Wirth B."/>
            <person name="Zeniou-Meyer M."/>
            <person name="Zivanovic Y."/>
            <person name="Bolotin-Fukuhara M."/>
            <person name="Thierry A."/>
            <person name="Bouchier C."/>
            <person name="Caudron B."/>
            <person name="Scarpelli C."/>
            <person name="Gaillardin C."/>
            <person name="Weissenbach J."/>
            <person name="Wincker P."/>
            <person name="Souciet J.-L."/>
        </authorList>
    </citation>
    <scope>NUCLEOTIDE SEQUENCE [LARGE SCALE GENOMIC DNA]</scope>
    <source>
        <strain>ATCC 36239 / CBS 767 / BCRC 21394 / JCM 1990 / NBRC 0083 / IGC 2968</strain>
    </source>
</reference>
<name>NACB_DEBHA</name>
<sequence length="154" mass="16796">MPVDPEKLAKLQKASVAKKVGGSRVKAKKNVKTEQDDTKLIEALGKLKAQKIEGIEEANFFKEDGKVLHFNRVGVQGAAQHNTFALTGYPQEKDVTQLIPQILPQLGAENLEILRKLAEQIQAGKNPELNAGGAEGAEEDIPDLIEGQKFDDVE</sequence>
<dbReference type="EMBL" id="CR382138">
    <property type="protein sequence ID" value="CAG89163.1"/>
    <property type="molecule type" value="Genomic_DNA"/>
</dbReference>
<dbReference type="RefSeq" id="XP_460820.1">
    <property type="nucleotide sequence ID" value="XM_460820.1"/>
</dbReference>
<dbReference type="SMR" id="Q6BLV1"/>
<dbReference type="FunCoup" id="Q6BLV1">
    <property type="interactions" value="1241"/>
</dbReference>
<dbReference type="STRING" id="284592.Q6BLV1"/>
<dbReference type="GeneID" id="2904334"/>
<dbReference type="KEGG" id="dha:DEHA2F10494g"/>
<dbReference type="VEuPathDB" id="FungiDB:DEHA2F10494g"/>
<dbReference type="eggNOG" id="KOG2240">
    <property type="taxonomic scope" value="Eukaryota"/>
</dbReference>
<dbReference type="HOGENOM" id="CLU_098726_2_2_1"/>
<dbReference type="InParanoid" id="Q6BLV1"/>
<dbReference type="OMA" id="AGDTYME"/>
<dbReference type="OrthoDB" id="8033832at2759"/>
<dbReference type="Proteomes" id="UP000000599">
    <property type="component" value="Chromosome F"/>
</dbReference>
<dbReference type="GO" id="GO:0005737">
    <property type="term" value="C:cytoplasm"/>
    <property type="evidence" value="ECO:0007669"/>
    <property type="project" value="UniProtKB-SubCell"/>
</dbReference>
<dbReference type="GO" id="GO:0005634">
    <property type="term" value="C:nucleus"/>
    <property type="evidence" value="ECO:0007669"/>
    <property type="project" value="UniProtKB-SubCell"/>
</dbReference>
<dbReference type="GO" id="GO:0015031">
    <property type="term" value="P:protein transport"/>
    <property type="evidence" value="ECO:0007669"/>
    <property type="project" value="UniProtKB-KW"/>
</dbReference>
<dbReference type="CDD" id="cd22055">
    <property type="entry name" value="NAC_BTF3"/>
    <property type="match status" value="1"/>
</dbReference>
<dbReference type="FunFam" id="2.20.70.30:FF:000001">
    <property type="entry name" value="Transcription factor BTF3 homolog"/>
    <property type="match status" value="1"/>
</dbReference>
<dbReference type="Gene3D" id="2.20.70.30">
    <property type="entry name" value="Nascent polypeptide-associated complex domain"/>
    <property type="match status" value="1"/>
</dbReference>
<dbReference type="InterPro" id="IPR039370">
    <property type="entry name" value="BTF3"/>
</dbReference>
<dbReference type="InterPro" id="IPR038187">
    <property type="entry name" value="NAC_A/B_dom_sf"/>
</dbReference>
<dbReference type="InterPro" id="IPR002715">
    <property type="entry name" value="Nas_poly-pep-assoc_cplx_dom"/>
</dbReference>
<dbReference type="PANTHER" id="PTHR10351">
    <property type="entry name" value="TRANSCRIPTION FACTOR BTF3 FAMILY MEMBER"/>
    <property type="match status" value="1"/>
</dbReference>
<dbReference type="Pfam" id="PF01849">
    <property type="entry name" value="NAC"/>
    <property type="match status" value="1"/>
</dbReference>
<dbReference type="SMART" id="SM01407">
    <property type="entry name" value="NAC"/>
    <property type="match status" value="1"/>
</dbReference>
<dbReference type="PROSITE" id="PS51151">
    <property type="entry name" value="NAC_AB"/>
    <property type="match status" value="1"/>
</dbReference>
<organism>
    <name type="scientific">Debaryomyces hansenii (strain ATCC 36239 / CBS 767 / BCRC 21394 / JCM 1990 / NBRC 0083 / IGC 2968)</name>
    <name type="common">Yeast</name>
    <name type="synonym">Torulaspora hansenii</name>
    <dbReference type="NCBI Taxonomy" id="284592"/>
    <lineage>
        <taxon>Eukaryota</taxon>
        <taxon>Fungi</taxon>
        <taxon>Dikarya</taxon>
        <taxon>Ascomycota</taxon>
        <taxon>Saccharomycotina</taxon>
        <taxon>Pichiomycetes</taxon>
        <taxon>Debaryomycetaceae</taxon>
        <taxon>Debaryomyces</taxon>
    </lineage>
</organism>
<feature type="chain" id="PRO_0000273509" description="Nascent polypeptide-associated complex subunit beta">
    <location>
        <begin position="1"/>
        <end position="154"/>
    </location>
</feature>
<feature type="domain" description="NAC-A/B" evidence="2">
    <location>
        <begin position="34"/>
        <end position="99"/>
    </location>
</feature>
<feature type="region of interest" description="Disordered" evidence="3">
    <location>
        <begin position="125"/>
        <end position="154"/>
    </location>
</feature>
<accession>Q6BLV1</accession>
<gene>
    <name type="primary">EGD1</name>
    <name type="ordered locus">DEHA2F10494g</name>
</gene>
<protein>
    <recommendedName>
        <fullName>Nascent polypeptide-associated complex subunit beta</fullName>
        <shortName>NAC-beta</shortName>
    </recommendedName>
    <alternativeName>
        <fullName>Beta-NAC</fullName>
    </alternativeName>
</protein>
<proteinExistence type="inferred from homology"/>
<comment type="function">
    <text evidence="1">Component of the nascent polypeptide-associated complex (NAC), a dynamic component of the ribosomal exit tunnel, protecting the emerging polypeptides from interaction with other cytoplasmic proteins to ensure appropriate nascent protein targeting. The NAC complex also promotes mitochondrial protein import by enhancing productive ribosome interactions with the outer mitochondrial membrane and blocks the inappropriate interaction of ribosomes translating non-secretory nascent polypeptides with translocation sites in the membrane of the endoplasmic reticulum. EGD1 may act as a transcription factor that exert a negative effect on the expression of several genes that are transcribed by RNA polymerase II.</text>
</comment>
<comment type="subunit">
    <text evidence="1">Part of the nascent polypeptide-associated complex (NAC), consisting of EGD2 and EGD1. NAC associates with ribosomes via EGD1 (By similarity).</text>
</comment>
<comment type="subcellular location">
    <subcellularLocation>
        <location evidence="1">Cytoplasm</location>
    </subcellularLocation>
    <subcellularLocation>
        <location evidence="1">Nucleus</location>
    </subcellularLocation>
    <text evidence="1">Predominantly cytoplasmic, may also transiently localize to the nucleus.</text>
</comment>
<comment type="similarity">
    <text evidence="4">Belongs to the NAC-beta family.</text>
</comment>
<evidence type="ECO:0000250" key="1"/>
<evidence type="ECO:0000255" key="2">
    <source>
        <dbReference type="PROSITE-ProRule" id="PRU00507"/>
    </source>
</evidence>
<evidence type="ECO:0000256" key="3">
    <source>
        <dbReference type="SAM" id="MobiDB-lite"/>
    </source>
</evidence>
<evidence type="ECO:0000305" key="4"/>
<keyword id="KW-0963">Cytoplasm</keyword>
<keyword id="KW-0539">Nucleus</keyword>
<keyword id="KW-0653">Protein transport</keyword>
<keyword id="KW-1185">Reference proteome</keyword>
<keyword id="KW-0678">Repressor</keyword>
<keyword id="KW-0804">Transcription</keyword>
<keyword id="KW-0805">Transcription regulation</keyword>
<keyword id="KW-0813">Transport</keyword>